<feature type="chain" id="PRO_0000225094" description="UDP-N-acetylglucosamine--N-acetylmuramyl-(pentapeptide) pyrophosphoryl-undecaprenol N-acetylglucosamine transferase">
    <location>
        <begin position="1"/>
        <end position="355"/>
    </location>
</feature>
<feature type="binding site" evidence="1">
    <location>
        <begin position="15"/>
        <end position="17"/>
    </location>
    <ligand>
        <name>UDP-N-acetyl-alpha-D-glucosamine</name>
        <dbReference type="ChEBI" id="CHEBI:57705"/>
    </ligand>
</feature>
<feature type="binding site" evidence="1">
    <location>
        <position position="127"/>
    </location>
    <ligand>
        <name>UDP-N-acetyl-alpha-D-glucosamine</name>
        <dbReference type="ChEBI" id="CHEBI:57705"/>
    </ligand>
</feature>
<feature type="binding site" evidence="1">
    <location>
        <position position="163"/>
    </location>
    <ligand>
        <name>UDP-N-acetyl-alpha-D-glucosamine</name>
        <dbReference type="ChEBI" id="CHEBI:57705"/>
    </ligand>
</feature>
<feature type="binding site" evidence="1">
    <location>
        <position position="191"/>
    </location>
    <ligand>
        <name>UDP-N-acetyl-alpha-D-glucosamine</name>
        <dbReference type="ChEBI" id="CHEBI:57705"/>
    </ligand>
</feature>
<feature type="binding site" evidence="1">
    <location>
        <position position="244"/>
    </location>
    <ligand>
        <name>UDP-N-acetyl-alpha-D-glucosamine</name>
        <dbReference type="ChEBI" id="CHEBI:57705"/>
    </ligand>
</feature>
<feature type="binding site" evidence="1">
    <location>
        <begin position="263"/>
        <end position="268"/>
    </location>
    <ligand>
        <name>UDP-N-acetyl-alpha-D-glucosamine</name>
        <dbReference type="ChEBI" id="CHEBI:57705"/>
    </ligand>
</feature>
<feature type="binding site" evidence="1">
    <location>
        <position position="288"/>
    </location>
    <ligand>
        <name>UDP-N-acetyl-alpha-D-glucosamine</name>
        <dbReference type="ChEBI" id="CHEBI:57705"/>
    </ligand>
</feature>
<evidence type="ECO:0000255" key="1">
    <source>
        <dbReference type="HAMAP-Rule" id="MF_00033"/>
    </source>
</evidence>
<protein>
    <recommendedName>
        <fullName evidence="1">UDP-N-acetylglucosamine--N-acetylmuramyl-(pentapeptide) pyrophosphoryl-undecaprenol N-acetylglucosamine transferase</fullName>
        <ecNumber evidence="1">2.4.1.227</ecNumber>
    </recommendedName>
    <alternativeName>
        <fullName evidence="1">Undecaprenyl-PP-MurNAc-pentapeptide-UDPGlcNAc GlcNAc transferase</fullName>
    </alternativeName>
</protein>
<organism>
    <name type="scientific">Shigella boydii serotype 4 (strain Sb227)</name>
    <dbReference type="NCBI Taxonomy" id="300268"/>
    <lineage>
        <taxon>Bacteria</taxon>
        <taxon>Pseudomonadati</taxon>
        <taxon>Pseudomonadota</taxon>
        <taxon>Gammaproteobacteria</taxon>
        <taxon>Enterobacterales</taxon>
        <taxon>Enterobacteriaceae</taxon>
        <taxon>Shigella</taxon>
    </lineage>
</organism>
<sequence>MSGQGKRLMVMAGGTGGHVFPGLAVAHHLMAQGWQVRWLGTADRMEADLVPKHGIEIDFIRISGLRGKGIKALIAAPLRIFNAWRQARAIMKAYKPDVVLGMGGYVSGPGGLAAWSLGIPVVLHEQNGIAGLTNKWLAKIATKVMQAFPGAFPNAEVVGNPVRTDVLALPLPQQRLAGREGPVRVLVVGGSQGARILNQTMPQVAAKLGDSVTIWHQSGKGSQQSVEQAYAEAGQPQHKVTEFIDDMAAAYAWADVVVCRSGALTVSEIAAAGLPALFVPFQHKDRQQYWNALPLEKAGAAKIIEQPQLSVDAVANTLAGWSRETLLTMAERARAASIPDATERVANEVSRAARA</sequence>
<dbReference type="EC" id="2.4.1.227" evidence="1"/>
<dbReference type="EMBL" id="CP000036">
    <property type="protein sequence ID" value="ABB64813.1"/>
    <property type="molecule type" value="Genomic_DNA"/>
</dbReference>
<dbReference type="RefSeq" id="WP_000016559.1">
    <property type="nucleotide sequence ID" value="NC_007613.1"/>
</dbReference>
<dbReference type="SMR" id="Q326E5"/>
<dbReference type="CAZy" id="GT28">
    <property type="family name" value="Glycosyltransferase Family 28"/>
</dbReference>
<dbReference type="GeneID" id="93777344"/>
<dbReference type="KEGG" id="sbo:SBO_0078"/>
<dbReference type="HOGENOM" id="CLU_037404_2_0_6"/>
<dbReference type="UniPathway" id="UPA00219"/>
<dbReference type="Proteomes" id="UP000007067">
    <property type="component" value="Chromosome"/>
</dbReference>
<dbReference type="GO" id="GO:0005886">
    <property type="term" value="C:plasma membrane"/>
    <property type="evidence" value="ECO:0007669"/>
    <property type="project" value="UniProtKB-SubCell"/>
</dbReference>
<dbReference type="GO" id="GO:0051991">
    <property type="term" value="F:UDP-N-acetyl-D-glucosamine:N-acetylmuramoyl-L-alanyl-D-glutamyl-meso-2,6-diaminopimelyl-D-alanyl-D-alanine-diphosphoundecaprenol 4-beta-N-acetylglucosaminlytransferase activity"/>
    <property type="evidence" value="ECO:0007669"/>
    <property type="project" value="RHEA"/>
</dbReference>
<dbReference type="GO" id="GO:0050511">
    <property type="term" value="F:undecaprenyldiphospho-muramoylpentapeptide beta-N-acetylglucosaminyltransferase activity"/>
    <property type="evidence" value="ECO:0007669"/>
    <property type="project" value="UniProtKB-UniRule"/>
</dbReference>
<dbReference type="GO" id="GO:0005975">
    <property type="term" value="P:carbohydrate metabolic process"/>
    <property type="evidence" value="ECO:0007669"/>
    <property type="project" value="InterPro"/>
</dbReference>
<dbReference type="GO" id="GO:0051301">
    <property type="term" value="P:cell division"/>
    <property type="evidence" value="ECO:0007669"/>
    <property type="project" value="UniProtKB-KW"/>
</dbReference>
<dbReference type="GO" id="GO:0071555">
    <property type="term" value="P:cell wall organization"/>
    <property type="evidence" value="ECO:0007669"/>
    <property type="project" value="UniProtKB-KW"/>
</dbReference>
<dbReference type="GO" id="GO:0030259">
    <property type="term" value="P:lipid glycosylation"/>
    <property type="evidence" value="ECO:0007669"/>
    <property type="project" value="UniProtKB-UniRule"/>
</dbReference>
<dbReference type="GO" id="GO:0009252">
    <property type="term" value="P:peptidoglycan biosynthetic process"/>
    <property type="evidence" value="ECO:0007669"/>
    <property type="project" value="UniProtKB-UniRule"/>
</dbReference>
<dbReference type="GO" id="GO:0008360">
    <property type="term" value="P:regulation of cell shape"/>
    <property type="evidence" value="ECO:0007669"/>
    <property type="project" value="UniProtKB-KW"/>
</dbReference>
<dbReference type="CDD" id="cd03785">
    <property type="entry name" value="GT28_MurG"/>
    <property type="match status" value="1"/>
</dbReference>
<dbReference type="FunFam" id="3.40.50.2000:FF:000016">
    <property type="entry name" value="UDP-N-acetylglucosamine--N-acetylmuramyl-(pentapeptide) pyrophosphoryl-undecaprenol N-acetylglucosamine transferase"/>
    <property type="match status" value="1"/>
</dbReference>
<dbReference type="FunFam" id="3.40.50.2000:FF:000018">
    <property type="entry name" value="UDP-N-acetylglucosamine--N-acetylmuramyl-(pentapeptide) pyrophosphoryl-undecaprenol N-acetylglucosamine transferase"/>
    <property type="match status" value="1"/>
</dbReference>
<dbReference type="Gene3D" id="3.40.50.2000">
    <property type="entry name" value="Glycogen Phosphorylase B"/>
    <property type="match status" value="2"/>
</dbReference>
<dbReference type="HAMAP" id="MF_00033">
    <property type="entry name" value="MurG"/>
    <property type="match status" value="1"/>
</dbReference>
<dbReference type="InterPro" id="IPR006009">
    <property type="entry name" value="GlcNAc_MurG"/>
</dbReference>
<dbReference type="InterPro" id="IPR007235">
    <property type="entry name" value="Glyco_trans_28_C"/>
</dbReference>
<dbReference type="InterPro" id="IPR004276">
    <property type="entry name" value="GlycoTrans_28_N"/>
</dbReference>
<dbReference type="NCBIfam" id="TIGR01133">
    <property type="entry name" value="murG"/>
    <property type="match status" value="1"/>
</dbReference>
<dbReference type="PANTHER" id="PTHR21015:SF22">
    <property type="entry name" value="GLYCOSYLTRANSFERASE"/>
    <property type="match status" value="1"/>
</dbReference>
<dbReference type="PANTHER" id="PTHR21015">
    <property type="entry name" value="UDP-N-ACETYLGLUCOSAMINE--N-ACETYLMURAMYL-(PENTAPEPTIDE) PYROPHOSPHORYL-UNDECAPRENOL N-ACETYLGLUCOSAMINE TRANSFERASE 1"/>
    <property type="match status" value="1"/>
</dbReference>
<dbReference type="Pfam" id="PF04101">
    <property type="entry name" value="Glyco_tran_28_C"/>
    <property type="match status" value="1"/>
</dbReference>
<dbReference type="Pfam" id="PF03033">
    <property type="entry name" value="Glyco_transf_28"/>
    <property type="match status" value="1"/>
</dbReference>
<dbReference type="SUPFAM" id="SSF53756">
    <property type="entry name" value="UDP-Glycosyltransferase/glycogen phosphorylase"/>
    <property type="match status" value="1"/>
</dbReference>
<reference key="1">
    <citation type="journal article" date="2005" name="Nucleic Acids Res.">
        <title>Genome dynamics and diversity of Shigella species, the etiologic agents of bacillary dysentery.</title>
        <authorList>
            <person name="Yang F."/>
            <person name="Yang J."/>
            <person name="Zhang X."/>
            <person name="Chen L."/>
            <person name="Jiang Y."/>
            <person name="Yan Y."/>
            <person name="Tang X."/>
            <person name="Wang J."/>
            <person name="Xiong Z."/>
            <person name="Dong J."/>
            <person name="Xue Y."/>
            <person name="Zhu Y."/>
            <person name="Xu X."/>
            <person name="Sun L."/>
            <person name="Chen S."/>
            <person name="Nie H."/>
            <person name="Peng J."/>
            <person name="Xu J."/>
            <person name="Wang Y."/>
            <person name="Yuan Z."/>
            <person name="Wen Y."/>
            <person name="Yao Z."/>
            <person name="Shen Y."/>
            <person name="Qiang B."/>
            <person name="Hou Y."/>
            <person name="Yu J."/>
            <person name="Jin Q."/>
        </authorList>
    </citation>
    <scope>NUCLEOTIDE SEQUENCE [LARGE SCALE GENOMIC DNA]</scope>
    <source>
        <strain>Sb227</strain>
    </source>
</reference>
<gene>
    <name evidence="1" type="primary">murG</name>
    <name type="ordered locus">SBO_0078</name>
</gene>
<keyword id="KW-0131">Cell cycle</keyword>
<keyword id="KW-0132">Cell division</keyword>
<keyword id="KW-0997">Cell inner membrane</keyword>
<keyword id="KW-1003">Cell membrane</keyword>
<keyword id="KW-0133">Cell shape</keyword>
<keyword id="KW-0961">Cell wall biogenesis/degradation</keyword>
<keyword id="KW-0328">Glycosyltransferase</keyword>
<keyword id="KW-0472">Membrane</keyword>
<keyword id="KW-0573">Peptidoglycan synthesis</keyword>
<keyword id="KW-0808">Transferase</keyword>
<comment type="function">
    <text evidence="1">Cell wall formation. Catalyzes the transfer of a GlcNAc subunit on undecaprenyl-pyrophosphoryl-MurNAc-pentapeptide (lipid intermediate I) to form undecaprenyl-pyrophosphoryl-MurNAc-(pentapeptide)GlcNAc (lipid intermediate II).</text>
</comment>
<comment type="catalytic activity">
    <reaction evidence="1">
        <text>di-trans,octa-cis-undecaprenyl diphospho-N-acetyl-alpha-D-muramoyl-L-alanyl-D-glutamyl-meso-2,6-diaminopimeloyl-D-alanyl-D-alanine + UDP-N-acetyl-alpha-D-glucosamine = di-trans,octa-cis-undecaprenyl diphospho-[N-acetyl-alpha-D-glucosaminyl-(1-&gt;4)]-N-acetyl-alpha-D-muramoyl-L-alanyl-D-glutamyl-meso-2,6-diaminopimeloyl-D-alanyl-D-alanine + UDP + H(+)</text>
        <dbReference type="Rhea" id="RHEA:31227"/>
        <dbReference type="ChEBI" id="CHEBI:15378"/>
        <dbReference type="ChEBI" id="CHEBI:57705"/>
        <dbReference type="ChEBI" id="CHEBI:58223"/>
        <dbReference type="ChEBI" id="CHEBI:61387"/>
        <dbReference type="ChEBI" id="CHEBI:61388"/>
        <dbReference type="EC" id="2.4.1.227"/>
    </reaction>
</comment>
<comment type="pathway">
    <text evidence="1">Cell wall biogenesis; peptidoglycan biosynthesis.</text>
</comment>
<comment type="subcellular location">
    <subcellularLocation>
        <location evidence="1">Cell inner membrane</location>
        <topology evidence="1">Peripheral membrane protein</topology>
        <orientation evidence="1">Cytoplasmic side</orientation>
    </subcellularLocation>
</comment>
<comment type="similarity">
    <text evidence="1">Belongs to the glycosyltransferase 28 family. MurG subfamily.</text>
</comment>
<accession>Q326E5</accession>
<proteinExistence type="inferred from homology"/>
<name>MURG_SHIBS</name>